<keyword id="KW-0027">Amidation</keyword>
<keyword id="KW-0903">Direct protein sequencing</keyword>
<keyword id="KW-0527">Neuropeptide</keyword>
<keyword id="KW-1185">Reference proteome</keyword>
<keyword id="KW-0964">Secreted</keyword>
<keyword id="KW-0732">Signal</keyword>
<feature type="signal peptide" evidence="1">
    <location>
        <begin position="1"/>
        <end position="16"/>
    </location>
</feature>
<feature type="propeptide" id="PRO_0000021845">
    <location>
        <begin position="17"/>
        <end position="54"/>
    </location>
</feature>
<feature type="peptide" id="PRO_0000021846" description="SHA-peptide">
    <location>
        <begin position="55"/>
        <end position="66"/>
    </location>
</feature>
<feature type="propeptide" id="PRO_0000021847">
    <location>
        <begin position="67"/>
        <end position="79"/>
    </location>
</feature>
<feature type="peptide" id="PRO_0000021848" description="VVI-amide peptide">
    <location>
        <begin position="80"/>
        <end position="89"/>
    </location>
</feature>
<feature type="modified residue" description="Isoleucine amide" evidence="2">
    <location>
        <position position="89"/>
    </location>
</feature>
<accession>Q9VV28</accession>
<name>NPLP3_DROME</name>
<evidence type="ECO:0000255" key="1"/>
<evidence type="ECO:0000269" key="2">
    <source>
    </source>
</evidence>
<comment type="subcellular location">
    <subcellularLocation>
        <location>Secreted</location>
    </subcellularLocation>
</comment>
<organism>
    <name type="scientific">Drosophila melanogaster</name>
    <name type="common">Fruit fly</name>
    <dbReference type="NCBI Taxonomy" id="7227"/>
    <lineage>
        <taxon>Eukaryota</taxon>
        <taxon>Metazoa</taxon>
        <taxon>Ecdysozoa</taxon>
        <taxon>Arthropoda</taxon>
        <taxon>Hexapoda</taxon>
        <taxon>Insecta</taxon>
        <taxon>Pterygota</taxon>
        <taxon>Neoptera</taxon>
        <taxon>Endopterygota</taxon>
        <taxon>Diptera</taxon>
        <taxon>Brachycera</taxon>
        <taxon>Muscomorpha</taxon>
        <taxon>Ephydroidea</taxon>
        <taxon>Drosophilidae</taxon>
        <taxon>Drosophila</taxon>
        <taxon>Sophophora</taxon>
    </lineage>
</organism>
<protein>
    <recommendedName>
        <fullName>Neuropeptide-like 3</fullName>
    </recommendedName>
    <component>
        <recommendedName>
            <fullName>SHA-peptide</fullName>
        </recommendedName>
    </component>
    <component>
        <recommendedName>
            <fullName>VVI-amide peptide</fullName>
        </recommendedName>
    </component>
</protein>
<dbReference type="EMBL" id="AE014296">
    <property type="protein sequence ID" value="AAF49494.1"/>
    <property type="molecule type" value="Genomic_DNA"/>
</dbReference>
<dbReference type="EMBL" id="AY113570">
    <property type="protein sequence ID" value="AAM29575.1"/>
    <property type="molecule type" value="mRNA"/>
</dbReference>
<dbReference type="RefSeq" id="NP_652710.1">
    <property type="nucleotide sequence ID" value="NM_144453.3"/>
</dbReference>
<dbReference type="FunCoup" id="Q9VV28">
    <property type="interactions" value="72"/>
</dbReference>
<dbReference type="STRING" id="7227.FBpp0075128"/>
<dbReference type="PaxDb" id="7227-FBpp0075128"/>
<dbReference type="DNASU" id="59235"/>
<dbReference type="EnsemblMetazoa" id="FBtr0075369">
    <property type="protein sequence ID" value="FBpp0075128"/>
    <property type="gene ID" value="FBgn0042201"/>
</dbReference>
<dbReference type="GeneID" id="59235"/>
<dbReference type="KEGG" id="dme:Dmel_CG13061"/>
<dbReference type="AGR" id="FB:FBgn0042201"/>
<dbReference type="CTD" id="59235"/>
<dbReference type="FlyBase" id="FBgn0042201">
    <property type="gene designation" value="Nplp3"/>
</dbReference>
<dbReference type="VEuPathDB" id="VectorBase:FBgn0042201"/>
<dbReference type="eggNOG" id="ENOG502TBFF">
    <property type="taxonomic scope" value="Eukaryota"/>
</dbReference>
<dbReference type="HOGENOM" id="CLU_2443129_0_0_1"/>
<dbReference type="InParanoid" id="Q9VV28"/>
<dbReference type="OMA" id="MACQIVA"/>
<dbReference type="OrthoDB" id="7867794at2759"/>
<dbReference type="PhylomeDB" id="Q9VV28"/>
<dbReference type="BioGRID-ORCS" id="59235">
    <property type="hits" value="0 hits in 1 CRISPR screen"/>
</dbReference>
<dbReference type="GenomeRNAi" id="59235"/>
<dbReference type="PRO" id="PR:Q9VV28"/>
<dbReference type="Proteomes" id="UP000000803">
    <property type="component" value="Chromosome 3L"/>
</dbReference>
<dbReference type="Bgee" id="FBgn0042201">
    <property type="expression patterns" value="Expressed in capitellum (Drosophila) and 129 other cell types or tissues"/>
</dbReference>
<dbReference type="ExpressionAtlas" id="Q9VV28">
    <property type="expression patterns" value="baseline and differential"/>
</dbReference>
<dbReference type="GO" id="GO:0005576">
    <property type="term" value="C:extracellular region"/>
    <property type="evidence" value="ECO:0000303"/>
    <property type="project" value="UniProtKB"/>
</dbReference>
<dbReference type="GO" id="GO:0005184">
    <property type="term" value="F:neuropeptide hormone activity"/>
    <property type="evidence" value="ECO:0000303"/>
    <property type="project" value="UniProtKB"/>
</dbReference>
<dbReference type="GO" id="GO:0007218">
    <property type="term" value="P:neuropeptide signaling pathway"/>
    <property type="evidence" value="ECO:0000303"/>
    <property type="project" value="UniProtKB"/>
</dbReference>
<reference key="1">
    <citation type="journal article" date="2000" name="Science">
        <title>The genome sequence of Drosophila melanogaster.</title>
        <authorList>
            <person name="Adams M.D."/>
            <person name="Celniker S.E."/>
            <person name="Holt R.A."/>
            <person name="Evans C.A."/>
            <person name="Gocayne J.D."/>
            <person name="Amanatides P.G."/>
            <person name="Scherer S.E."/>
            <person name="Li P.W."/>
            <person name="Hoskins R.A."/>
            <person name="Galle R.F."/>
            <person name="George R.A."/>
            <person name="Lewis S.E."/>
            <person name="Richards S."/>
            <person name="Ashburner M."/>
            <person name="Henderson S.N."/>
            <person name="Sutton G.G."/>
            <person name="Wortman J.R."/>
            <person name="Yandell M.D."/>
            <person name="Zhang Q."/>
            <person name="Chen L.X."/>
            <person name="Brandon R.C."/>
            <person name="Rogers Y.-H.C."/>
            <person name="Blazej R.G."/>
            <person name="Champe M."/>
            <person name="Pfeiffer B.D."/>
            <person name="Wan K.H."/>
            <person name="Doyle C."/>
            <person name="Baxter E.G."/>
            <person name="Helt G."/>
            <person name="Nelson C.R."/>
            <person name="Miklos G.L.G."/>
            <person name="Abril J.F."/>
            <person name="Agbayani A."/>
            <person name="An H.-J."/>
            <person name="Andrews-Pfannkoch C."/>
            <person name="Baldwin D."/>
            <person name="Ballew R.M."/>
            <person name="Basu A."/>
            <person name="Baxendale J."/>
            <person name="Bayraktaroglu L."/>
            <person name="Beasley E.M."/>
            <person name="Beeson K.Y."/>
            <person name="Benos P.V."/>
            <person name="Berman B.P."/>
            <person name="Bhandari D."/>
            <person name="Bolshakov S."/>
            <person name="Borkova D."/>
            <person name="Botchan M.R."/>
            <person name="Bouck J."/>
            <person name="Brokstein P."/>
            <person name="Brottier P."/>
            <person name="Burtis K.C."/>
            <person name="Busam D.A."/>
            <person name="Butler H."/>
            <person name="Cadieu E."/>
            <person name="Center A."/>
            <person name="Chandra I."/>
            <person name="Cherry J.M."/>
            <person name="Cawley S."/>
            <person name="Dahlke C."/>
            <person name="Davenport L.B."/>
            <person name="Davies P."/>
            <person name="de Pablos B."/>
            <person name="Delcher A."/>
            <person name="Deng Z."/>
            <person name="Mays A.D."/>
            <person name="Dew I."/>
            <person name="Dietz S.M."/>
            <person name="Dodson K."/>
            <person name="Doup L.E."/>
            <person name="Downes M."/>
            <person name="Dugan-Rocha S."/>
            <person name="Dunkov B.C."/>
            <person name="Dunn P."/>
            <person name="Durbin K.J."/>
            <person name="Evangelista C.C."/>
            <person name="Ferraz C."/>
            <person name="Ferriera S."/>
            <person name="Fleischmann W."/>
            <person name="Fosler C."/>
            <person name="Gabrielian A.E."/>
            <person name="Garg N.S."/>
            <person name="Gelbart W.M."/>
            <person name="Glasser K."/>
            <person name="Glodek A."/>
            <person name="Gong F."/>
            <person name="Gorrell J.H."/>
            <person name="Gu Z."/>
            <person name="Guan P."/>
            <person name="Harris M."/>
            <person name="Harris N.L."/>
            <person name="Harvey D.A."/>
            <person name="Heiman T.J."/>
            <person name="Hernandez J.R."/>
            <person name="Houck J."/>
            <person name="Hostin D."/>
            <person name="Houston K.A."/>
            <person name="Howland T.J."/>
            <person name="Wei M.-H."/>
            <person name="Ibegwam C."/>
            <person name="Jalali M."/>
            <person name="Kalush F."/>
            <person name="Karpen G.H."/>
            <person name="Ke Z."/>
            <person name="Kennison J.A."/>
            <person name="Ketchum K.A."/>
            <person name="Kimmel B.E."/>
            <person name="Kodira C.D."/>
            <person name="Kraft C.L."/>
            <person name="Kravitz S."/>
            <person name="Kulp D."/>
            <person name="Lai Z."/>
            <person name="Lasko P."/>
            <person name="Lei Y."/>
            <person name="Levitsky A.A."/>
            <person name="Li J.H."/>
            <person name="Li Z."/>
            <person name="Liang Y."/>
            <person name="Lin X."/>
            <person name="Liu X."/>
            <person name="Mattei B."/>
            <person name="McIntosh T.C."/>
            <person name="McLeod M.P."/>
            <person name="McPherson D."/>
            <person name="Merkulov G."/>
            <person name="Milshina N.V."/>
            <person name="Mobarry C."/>
            <person name="Morris J."/>
            <person name="Moshrefi A."/>
            <person name="Mount S.M."/>
            <person name="Moy M."/>
            <person name="Murphy B."/>
            <person name="Murphy L."/>
            <person name="Muzny D.M."/>
            <person name="Nelson D.L."/>
            <person name="Nelson D.R."/>
            <person name="Nelson K.A."/>
            <person name="Nixon K."/>
            <person name="Nusskern D.R."/>
            <person name="Pacleb J.M."/>
            <person name="Palazzolo M."/>
            <person name="Pittman G.S."/>
            <person name="Pan S."/>
            <person name="Pollard J."/>
            <person name="Puri V."/>
            <person name="Reese M.G."/>
            <person name="Reinert K."/>
            <person name="Remington K."/>
            <person name="Saunders R.D.C."/>
            <person name="Scheeler F."/>
            <person name="Shen H."/>
            <person name="Shue B.C."/>
            <person name="Siden-Kiamos I."/>
            <person name="Simpson M."/>
            <person name="Skupski M.P."/>
            <person name="Smith T.J."/>
            <person name="Spier E."/>
            <person name="Spradling A.C."/>
            <person name="Stapleton M."/>
            <person name="Strong R."/>
            <person name="Sun E."/>
            <person name="Svirskas R."/>
            <person name="Tector C."/>
            <person name="Turner R."/>
            <person name="Venter E."/>
            <person name="Wang A.H."/>
            <person name="Wang X."/>
            <person name="Wang Z.-Y."/>
            <person name="Wassarman D.A."/>
            <person name="Weinstock G.M."/>
            <person name="Weissenbach J."/>
            <person name="Williams S.M."/>
            <person name="Woodage T."/>
            <person name="Worley K.C."/>
            <person name="Wu D."/>
            <person name="Yang S."/>
            <person name="Yao Q.A."/>
            <person name="Ye J."/>
            <person name="Yeh R.-F."/>
            <person name="Zaveri J.S."/>
            <person name="Zhan M."/>
            <person name="Zhang G."/>
            <person name="Zhao Q."/>
            <person name="Zheng L."/>
            <person name="Zheng X.H."/>
            <person name="Zhong F.N."/>
            <person name="Zhong W."/>
            <person name="Zhou X."/>
            <person name="Zhu S.C."/>
            <person name="Zhu X."/>
            <person name="Smith H.O."/>
            <person name="Gibbs R.A."/>
            <person name="Myers E.W."/>
            <person name="Rubin G.M."/>
            <person name="Venter J.C."/>
        </authorList>
    </citation>
    <scope>NUCLEOTIDE SEQUENCE [LARGE SCALE GENOMIC DNA]</scope>
    <source>
        <strain>Berkeley</strain>
    </source>
</reference>
<reference key="2">
    <citation type="journal article" date="2002" name="Genome Biol.">
        <title>Annotation of the Drosophila melanogaster euchromatic genome: a systematic review.</title>
        <authorList>
            <person name="Misra S."/>
            <person name="Crosby M.A."/>
            <person name="Mungall C.J."/>
            <person name="Matthews B.B."/>
            <person name="Campbell K.S."/>
            <person name="Hradecky P."/>
            <person name="Huang Y."/>
            <person name="Kaminker J.S."/>
            <person name="Millburn G.H."/>
            <person name="Prochnik S.E."/>
            <person name="Smith C.D."/>
            <person name="Tupy J.L."/>
            <person name="Whitfield E.J."/>
            <person name="Bayraktaroglu L."/>
            <person name="Berman B.P."/>
            <person name="Bettencourt B.R."/>
            <person name="Celniker S.E."/>
            <person name="de Grey A.D.N.J."/>
            <person name="Drysdale R.A."/>
            <person name="Harris N.L."/>
            <person name="Richter J."/>
            <person name="Russo S."/>
            <person name="Schroeder A.J."/>
            <person name="Shu S.Q."/>
            <person name="Stapleton M."/>
            <person name="Yamada C."/>
            <person name="Ashburner M."/>
            <person name="Gelbart W.M."/>
            <person name="Rubin G.M."/>
            <person name="Lewis S.E."/>
        </authorList>
    </citation>
    <scope>GENOME REANNOTATION</scope>
    <source>
        <strain>Berkeley</strain>
    </source>
</reference>
<reference key="3">
    <citation type="journal article" date="2002" name="Genome Biol.">
        <title>A Drosophila full-length cDNA resource.</title>
        <authorList>
            <person name="Stapleton M."/>
            <person name="Carlson J.W."/>
            <person name="Brokstein P."/>
            <person name="Yu C."/>
            <person name="Champe M."/>
            <person name="George R.A."/>
            <person name="Guarin H."/>
            <person name="Kronmiller B."/>
            <person name="Pacleb J.M."/>
            <person name="Park S."/>
            <person name="Wan K.H."/>
            <person name="Rubin G.M."/>
            <person name="Celniker S.E."/>
        </authorList>
    </citation>
    <scope>NUCLEOTIDE SEQUENCE [LARGE SCALE MRNA]</scope>
    <source>
        <strain>Berkeley</strain>
        <tissue>Head</tissue>
    </source>
</reference>
<reference key="4">
    <citation type="journal article" date="2002" name="J. Biol. Chem.">
        <title>Peptidomics of the larval Drosophila melanogaster central nervous system.</title>
        <authorList>
            <person name="Baggerman G."/>
            <person name="Cerstiaens A."/>
            <person name="De Loof A."/>
            <person name="Schoofs L."/>
        </authorList>
    </citation>
    <scope>PROTEIN SEQUENCE OF 55-66 AND 80-89</scope>
    <scope>AMIDATION AT ILE-89</scope>
    <source>
        <tissue>Larva</tissue>
    </source>
</reference>
<reference key="5">
    <citation type="journal article" date="2004" name="J. Neurochem.">
        <title>Expression of a novel neuropeptide, NVGTLARDFQLPIPNamide, in the larval and adult brain of Drosophila melanogaster.</title>
        <authorList>
            <person name="Verleyen P."/>
            <person name="Baggerman G."/>
            <person name="Wiehart U."/>
            <person name="Schoeters E."/>
            <person name="Van Lommel A."/>
            <person name="De Loof A."/>
            <person name="Schoofs L."/>
        </authorList>
    </citation>
    <scope>PROTEIN SEQUENCE OF 55-66 AND 80-89</scope>
    <source>
        <tissue>CNS</tissue>
    </source>
</reference>
<sequence length="90" mass="8688">MFKLCVFVALLSLAAAAPAPAPAPAPAPGLIGPGIVAPGIWGPTVVGSPLLAPQVVSVVPGAISHAAITQVHPSPLLIKSVHGLGPVVIG</sequence>
<gene>
    <name type="primary">Nplp3</name>
    <name type="ORF">CG13061</name>
</gene>
<proteinExistence type="evidence at protein level"/>